<reference key="1">
    <citation type="submission" date="2005-09" db="EMBL/GenBank/DDBJ databases">
        <authorList>
            <person name="Glass J.I."/>
            <person name="Lartigue C."/>
            <person name="Pfannkoch C."/>
            <person name="Baden-Tillson H."/>
            <person name="Smith H.O."/>
            <person name="Venter J.C."/>
            <person name="Roske K."/>
            <person name="Wise K.S."/>
            <person name="Calcutt M.J."/>
            <person name="Nelson W.C."/>
            <person name="Nierman W.C."/>
        </authorList>
    </citation>
    <scope>NUCLEOTIDE SEQUENCE [LARGE SCALE GENOMIC DNA]</scope>
    <source>
        <strain>California kid / ATCC 27343 / NCTC 10154</strain>
    </source>
</reference>
<name>ENGB_MYCCT</name>
<feature type="chain" id="PRO_0000266893" description="Probable GTP-binding protein EngB">
    <location>
        <begin position="1"/>
        <end position="196"/>
    </location>
</feature>
<feature type="domain" description="EngB-type G" evidence="1">
    <location>
        <begin position="21"/>
        <end position="195"/>
    </location>
</feature>
<feature type="binding site" evidence="1">
    <location>
        <begin position="29"/>
        <end position="36"/>
    </location>
    <ligand>
        <name>GTP</name>
        <dbReference type="ChEBI" id="CHEBI:37565"/>
    </ligand>
</feature>
<feature type="binding site" evidence="1">
    <location>
        <position position="36"/>
    </location>
    <ligand>
        <name>Mg(2+)</name>
        <dbReference type="ChEBI" id="CHEBI:18420"/>
    </ligand>
</feature>
<feature type="binding site" evidence="1">
    <location>
        <begin position="56"/>
        <end position="60"/>
    </location>
    <ligand>
        <name>GTP</name>
        <dbReference type="ChEBI" id="CHEBI:37565"/>
    </ligand>
</feature>
<feature type="binding site" evidence="1">
    <location>
        <position position="58"/>
    </location>
    <ligand>
        <name>Mg(2+)</name>
        <dbReference type="ChEBI" id="CHEBI:18420"/>
    </ligand>
</feature>
<feature type="binding site" evidence="1">
    <location>
        <begin position="75"/>
        <end position="78"/>
    </location>
    <ligand>
        <name>GTP</name>
        <dbReference type="ChEBI" id="CHEBI:37565"/>
    </ligand>
</feature>
<feature type="binding site" evidence="1">
    <location>
        <begin position="142"/>
        <end position="145"/>
    </location>
    <ligand>
        <name>GTP</name>
        <dbReference type="ChEBI" id="CHEBI:37565"/>
    </ligand>
</feature>
<feature type="binding site" evidence="1">
    <location>
        <begin position="174"/>
        <end position="176"/>
    </location>
    <ligand>
        <name>GTP</name>
        <dbReference type="ChEBI" id="CHEBI:37565"/>
    </ligand>
</feature>
<proteinExistence type="inferred from homology"/>
<protein>
    <recommendedName>
        <fullName evidence="1">Probable GTP-binding protein EngB</fullName>
    </recommendedName>
</protein>
<accession>Q2SSN1</accession>
<comment type="function">
    <text evidence="1">Necessary for normal cell division and for the maintenance of normal septation.</text>
</comment>
<comment type="cofactor">
    <cofactor evidence="1">
        <name>Mg(2+)</name>
        <dbReference type="ChEBI" id="CHEBI:18420"/>
    </cofactor>
</comment>
<comment type="similarity">
    <text evidence="1">Belongs to the TRAFAC class TrmE-Era-EngA-EngB-Septin-like GTPase superfamily. EngB GTPase family.</text>
</comment>
<dbReference type="EMBL" id="CP000123">
    <property type="protein sequence ID" value="ABC01543.1"/>
    <property type="molecule type" value="Genomic_DNA"/>
</dbReference>
<dbReference type="RefSeq" id="WP_011387133.1">
    <property type="nucleotide sequence ID" value="NC_007633.1"/>
</dbReference>
<dbReference type="SMR" id="Q2SSN1"/>
<dbReference type="GeneID" id="23778801"/>
<dbReference type="KEGG" id="mcp:MCAP_0245"/>
<dbReference type="HOGENOM" id="CLU_033732_1_0_14"/>
<dbReference type="PhylomeDB" id="Q2SSN1"/>
<dbReference type="Proteomes" id="UP000001928">
    <property type="component" value="Chromosome"/>
</dbReference>
<dbReference type="GO" id="GO:0005829">
    <property type="term" value="C:cytosol"/>
    <property type="evidence" value="ECO:0007669"/>
    <property type="project" value="TreeGrafter"/>
</dbReference>
<dbReference type="GO" id="GO:0005525">
    <property type="term" value="F:GTP binding"/>
    <property type="evidence" value="ECO:0007669"/>
    <property type="project" value="UniProtKB-UniRule"/>
</dbReference>
<dbReference type="GO" id="GO:0046872">
    <property type="term" value="F:metal ion binding"/>
    <property type="evidence" value="ECO:0007669"/>
    <property type="project" value="UniProtKB-KW"/>
</dbReference>
<dbReference type="GO" id="GO:0000917">
    <property type="term" value="P:division septum assembly"/>
    <property type="evidence" value="ECO:0007669"/>
    <property type="project" value="UniProtKB-KW"/>
</dbReference>
<dbReference type="CDD" id="cd01876">
    <property type="entry name" value="YihA_EngB"/>
    <property type="match status" value="1"/>
</dbReference>
<dbReference type="FunFam" id="3.40.50.300:FF:000098">
    <property type="entry name" value="Probable GTP-binding protein EngB"/>
    <property type="match status" value="1"/>
</dbReference>
<dbReference type="Gene3D" id="3.40.50.300">
    <property type="entry name" value="P-loop containing nucleotide triphosphate hydrolases"/>
    <property type="match status" value="1"/>
</dbReference>
<dbReference type="HAMAP" id="MF_00321">
    <property type="entry name" value="GTPase_EngB"/>
    <property type="match status" value="1"/>
</dbReference>
<dbReference type="InterPro" id="IPR030393">
    <property type="entry name" value="G_ENGB_dom"/>
</dbReference>
<dbReference type="InterPro" id="IPR006073">
    <property type="entry name" value="GTP-bd"/>
</dbReference>
<dbReference type="InterPro" id="IPR019987">
    <property type="entry name" value="GTP-bd_ribosome_bio_YsxC"/>
</dbReference>
<dbReference type="InterPro" id="IPR027417">
    <property type="entry name" value="P-loop_NTPase"/>
</dbReference>
<dbReference type="InterPro" id="IPR005225">
    <property type="entry name" value="Small_GTP-bd"/>
</dbReference>
<dbReference type="NCBIfam" id="TIGR03598">
    <property type="entry name" value="GTPase_YsxC"/>
    <property type="match status" value="1"/>
</dbReference>
<dbReference type="NCBIfam" id="TIGR00231">
    <property type="entry name" value="small_GTP"/>
    <property type="match status" value="1"/>
</dbReference>
<dbReference type="PANTHER" id="PTHR11649:SF13">
    <property type="entry name" value="ENGB-TYPE G DOMAIN-CONTAINING PROTEIN"/>
    <property type="match status" value="1"/>
</dbReference>
<dbReference type="PANTHER" id="PTHR11649">
    <property type="entry name" value="MSS1/TRME-RELATED GTP-BINDING PROTEIN"/>
    <property type="match status" value="1"/>
</dbReference>
<dbReference type="Pfam" id="PF01926">
    <property type="entry name" value="MMR_HSR1"/>
    <property type="match status" value="1"/>
</dbReference>
<dbReference type="PRINTS" id="PR00449">
    <property type="entry name" value="RASTRNSFRMNG"/>
</dbReference>
<dbReference type="SUPFAM" id="SSF52540">
    <property type="entry name" value="P-loop containing nucleoside triphosphate hydrolases"/>
    <property type="match status" value="1"/>
</dbReference>
<dbReference type="PROSITE" id="PS51706">
    <property type="entry name" value="G_ENGB"/>
    <property type="match status" value="1"/>
</dbReference>
<gene>
    <name evidence="1" type="primary">engB</name>
    <name type="ordered locus">MCAP_0245</name>
</gene>
<sequence>MIKQASFITSAANKSNWINDDVSEICLIGRSNVGKSSFINSLTNNNKLAKISNTPGKTRLLNFFEINKGEYRLVDAPGYGYAKVDDSIKIQFAKMMEEYFINRKNLKGVFLLLDLRHKPSNDDIMMYQFLKHYNIPVVIIGTKLDKLKKNEYIKNEKMIKEAINFYQEDDFIKISNLNKTNIIKCYELINKLLGSK</sequence>
<keyword id="KW-0131">Cell cycle</keyword>
<keyword id="KW-0132">Cell division</keyword>
<keyword id="KW-0342">GTP-binding</keyword>
<keyword id="KW-0460">Magnesium</keyword>
<keyword id="KW-0479">Metal-binding</keyword>
<keyword id="KW-0547">Nucleotide-binding</keyword>
<keyword id="KW-0717">Septation</keyword>
<evidence type="ECO:0000255" key="1">
    <source>
        <dbReference type="HAMAP-Rule" id="MF_00321"/>
    </source>
</evidence>
<organism>
    <name type="scientific">Mycoplasma capricolum subsp. capricolum (strain California kid / ATCC 27343 / NCTC 10154)</name>
    <dbReference type="NCBI Taxonomy" id="340047"/>
    <lineage>
        <taxon>Bacteria</taxon>
        <taxon>Bacillati</taxon>
        <taxon>Mycoplasmatota</taxon>
        <taxon>Mollicutes</taxon>
        <taxon>Mycoplasmataceae</taxon>
        <taxon>Mycoplasma</taxon>
    </lineage>
</organism>